<accession>P0DE47</accession>
<accession>P66259</accession>
<accession>Q9A1J1</accession>
<organism>
    <name type="scientific">Streptococcus pyogenes serotype M3 (strain SSI-1)</name>
    <dbReference type="NCBI Taxonomy" id="193567"/>
    <lineage>
        <taxon>Bacteria</taxon>
        <taxon>Bacillati</taxon>
        <taxon>Bacillota</taxon>
        <taxon>Bacilli</taxon>
        <taxon>Lactobacillales</taxon>
        <taxon>Streptococcaceae</taxon>
        <taxon>Streptococcus</taxon>
    </lineage>
</organism>
<evidence type="ECO:0000255" key="1">
    <source>
        <dbReference type="HAMAP-Rule" id="MF_00391"/>
    </source>
</evidence>
<evidence type="ECO:0000256" key="2">
    <source>
        <dbReference type="SAM" id="MobiDB-lite"/>
    </source>
</evidence>
<evidence type="ECO:0000305" key="3"/>
<comment type="similarity">
    <text evidence="1">Belongs to the bacterial ribosomal protein bL34 family.</text>
</comment>
<reference key="1">
    <citation type="journal article" date="2003" name="Genome Res.">
        <title>Genome sequence of an M3 strain of Streptococcus pyogenes reveals a large-scale genomic rearrangement in invasive strains and new insights into phage evolution.</title>
        <authorList>
            <person name="Nakagawa I."/>
            <person name="Kurokawa K."/>
            <person name="Yamashita A."/>
            <person name="Nakata M."/>
            <person name="Tomiyasu Y."/>
            <person name="Okahashi N."/>
            <person name="Kawabata S."/>
            <person name="Yamazaki K."/>
            <person name="Shiba T."/>
            <person name="Yasunaga T."/>
            <person name="Hayashi H."/>
            <person name="Hattori M."/>
            <person name="Hamada S."/>
        </authorList>
    </citation>
    <scope>NUCLEOTIDE SEQUENCE [LARGE SCALE GENOMIC DNA]</scope>
    <source>
        <strain>SSI-1</strain>
    </source>
</reference>
<feature type="chain" id="PRO_0000411513" description="Large ribosomal subunit protein bL34">
    <location>
        <begin position="1"/>
        <end position="44"/>
    </location>
</feature>
<feature type="region of interest" description="Disordered" evidence="2">
    <location>
        <begin position="1"/>
        <end position="44"/>
    </location>
</feature>
<gene>
    <name evidence="1" type="primary">rpmH</name>
    <name type="ordered locus">SPs0183</name>
</gene>
<dbReference type="EMBL" id="BA000034">
    <property type="protein sequence ID" value="BAC63278.1"/>
    <property type="molecule type" value="Genomic_DNA"/>
</dbReference>
<dbReference type="RefSeq" id="WP_002885866.1">
    <property type="nucleotide sequence ID" value="NC_004606.1"/>
</dbReference>
<dbReference type="SMR" id="P0DE47"/>
<dbReference type="GeneID" id="93923177"/>
<dbReference type="KEGG" id="sps:SPs0183"/>
<dbReference type="HOGENOM" id="CLU_129938_2_0_9"/>
<dbReference type="GO" id="GO:1990904">
    <property type="term" value="C:ribonucleoprotein complex"/>
    <property type="evidence" value="ECO:0007669"/>
    <property type="project" value="UniProtKB-KW"/>
</dbReference>
<dbReference type="GO" id="GO:0005840">
    <property type="term" value="C:ribosome"/>
    <property type="evidence" value="ECO:0007669"/>
    <property type="project" value="UniProtKB-KW"/>
</dbReference>
<dbReference type="GO" id="GO:0003735">
    <property type="term" value="F:structural constituent of ribosome"/>
    <property type="evidence" value="ECO:0007669"/>
    <property type="project" value="InterPro"/>
</dbReference>
<dbReference type="GO" id="GO:0006412">
    <property type="term" value="P:translation"/>
    <property type="evidence" value="ECO:0007669"/>
    <property type="project" value="UniProtKB-UniRule"/>
</dbReference>
<dbReference type="FunFam" id="1.10.287.3980:FF:000001">
    <property type="entry name" value="Mitochondrial ribosomal protein L34"/>
    <property type="match status" value="1"/>
</dbReference>
<dbReference type="Gene3D" id="1.10.287.3980">
    <property type="match status" value="1"/>
</dbReference>
<dbReference type="HAMAP" id="MF_00391">
    <property type="entry name" value="Ribosomal_bL34"/>
    <property type="match status" value="1"/>
</dbReference>
<dbReference type="InterPro" id="IPR000271">
    <property type="entry name" value="Ribosomal_bL34"/>
</dbReference>
<dbReference type="InterPro" id="IPR020939">
    <property type="entry name" value="Ribosomal_bL34_CS"/>
</dbReference>
<dbReference type="NCBIfam" id="TIGR01030">
    <property type="entry name" value="rpmH_bact"/>
    <property type="match status" value="1"/>
</dbReference>
<dbReference type="PANTHER" id="PTHR14503:SF4">
    <property type="entry name" value="LARGE RIBOSOMAL SUBUNIT PROTEIN BL34M"/>
    <property type="match status" value="1"/>
</dbReference>
<dbReference type="PANTHER" id="PTHR14503">
    <property type="entry name" value="MITOCHONDRIAL RIBOSOMAL PROTEIN 34 FAMILY MEMBER"/>
    <property type="match status" value="1"/>
</dbReference>
<dbReference type="Pfam" id="PF00468">
    <property type="entry name" value="Ribosomal_L34"/>
    <property type="match status" value="1"/>
</dbReference>
<dbReference type="PROSITE" id="PS00784">
    <property type="entry name" value="RIBOSOMAL_L34"/>
    <property type="match status" value="1"/>
</dbReference>
<keyword id="KW-0687">Ribonucleoprotein</keyword>
<keyword id="KW-0689">Ribosomal protein</keyword>
<protein>
    <recommendedName>
        <fullName evidence="1">Large ribosomal subunit protein bL34</fullName>
    </recommendedName>
    <alternativeName>
        <fullName evidence="3">50S ribosomal protein L34</fullName>
    </alternativeName>
</protein>
<proteinExistence type="inferred from homology"/>
<sequence length="44" mass="5361">MKRTYQPSKIRRQRKHGFRHRMSTKNGRRVLAARRRKGRKVLSA</sequence>
<name>RL34_STRPQ</name>